<comment type="similarity">
    <text evidence="1">Belongs to the UPF0237 family.</text>
</comment>
<organism>
    <name type="scientific">Clostridium acetobutylicum (strain ATCC 824 / DSM 792 / JCM 1419 / IAM 19013 / LMG 5710 / NBRC 13948 / NRRL B-527 / VKM B-1787 / 2291 / W)</name>
    <dbReference type="NCBI Taxonomy" id="272562"/>
    <lineage>
        <taxon>Bacteria</taxon>
        <taxon>Bacillati</taxon>
        <taxon>Bacillota</taxon>
        <taxon>Clostridia</taxon>
        <taxon>Eubacteriales</taxon>
        <taxon>Clostridiaceae</taxon>
        <taxon>Clostridium</taxon>
    </lineage>
</organism>
<feature type="chain" id="PRO_0000219894" description="UPF0237 protein CA_C0478">
    <location>
        <begin position="1"/>
        <end position="89"/>
    </location>
</feature>
<feature type="domain" description="ACT" evidence="1">
    <location>
        <begin position="4"/>
        <end position="78"/>
    </location>
</feature>
<protein>
    <recommendedName>
        <fullName evidence="1">UPF0237 protein CA_C0478</fullName>
    </recommendedName>
</protein>
<keyword id="KW-1185">Reference proteome</keyword>
<name>Y478_CLOAB</name>
<reference key="1">
    <citation type="journal article" date="2001" name="J. Bacteriol.">
        <title>Genome sequence and comparative analysis of the solvent-producing bacterium Clostridium acetobutylicum.</title>
        <authorList>
            <person name="Noelling J."/>
            <person name="Breton G."/>
            <person name="Omelchenko M.V."/>
            <person name="Makarova K.S."/>
            <person name="Zeng Q."/>
            <person name="Gibson R."/>
            <person name="Lee H.M."/>
            <person name="Dubois J."/>
            <person name="Qiu D."/>
            <person name="Hitti J."/>
            <person name="Wolf Y.I."/>
            <person name="Tatusov R.L."/>
            <person name="Sabathe F."/>
            <person name="Doucette-Stamm L.A."/>
            <person name="Soucaille P."/>
            <person name="Daly M.J."/>
            <person name="Bennett G.N."/>
            <person name="Koonin E.V."/>
            <person name="Smith D.R."/>
        </authorList>
    </citation>
    <scope>NUCLEOTIDE SEQUENCE [LARGE SCALE GENOMIC DNA]</scope>
    <source>
        <strain>ATCC 824 / DSM 792 / JCM 1419 / IAM 19013 / LMG 5710 / NBRC 13948 / NRRL B-527 / VKM B-1787 / 2291 / W</strain>
    </source>
</reference>
<gene>
    <name type="ordered locus">CA_C0478</name>
</gene>
<accession>Q97LS6</accession>
<dbReference type="EMBL" id="AE001437">
    <property type="protein sequence ID" value="AAK78458.1"/>
    <property type="molecule type" value="Genomic_DNA"/>
</dbReference>
<dbReference type="PIR" id="G96958">
    <property type="entry name" value="G96958"/>
</dbReference>
<dbReference type="RefSeq" id="NP_347118.1">
    <property type="nucleotide sequence ID" value="NC_003030.1"/>
</dbReference>
<dbReference type="RefSeq" id="WP_010963800.1">
    <property type="nucleotide sequence ID" value="NC_003030.1"/>
</dbReference>
<dbReference type="SMR" id="Q97LS6"/>
<dbReference type="STRING" id="272562.CA_C0478"/>
<dbReference type="KEGG" id="cac:CA_C0478"/>
<dbReference type="PATRIC" id="fig|272562.8.peg.677"/>
<dbReference type="eggNOG" id="COG3830">
    <property type="taxonomic scope" value="Bacteria"/>
</dbReference>
<dbReference type="HOGENOM" id="CLU_155669_0_1_9"/>
<dbReference type="OrthoDB" id="9803078at2"/>
<dbReference type="Proteomes" id="UP000000814">
    <property type="component" value="Chromosome"/>
</dbReference>
<dbReference type="CDD" id="cd04872">
    <property type="entry name" value="ACT_1ZPV"/>
    <property type="match status" value="1"/>
</dbReference>
<dbReference type="FunFam" id="3.30.70.260:FF:000032">
    <property type="entry name" value="UPF0237 protein SP_0238"/>
    <property type="match status" value="1"/>
</dbReference>
<dbReference type="Gene3D" id="3.30.70.260">
    <property type="match status" value="1"/>
</dbReference>
<dbReference type="HAMAP" id="MF_01054">
    <property type="entry name" value="UPF0237"/>
    <property type="match status" value="1"/>
</dbReference>
<dbReference type="InterPro" id="IPR045865">
    <property type="entry name" value="ACT-like_dom_sf"/>
</dbReference>
<dbReference type="InterPro" id="IPR002912">
    <property type="entry name" value="ACT_dom"/>
</dbReference>
<dbReference type="InterPro" id="IPR050990">
    <property type="entry name" value="UPF0237/GcvR_regulator"/>
</dbReference>
<dbReference type="InterPro" id="IPR022986">
    <property type="entry name" value="UPF0237_ACT"/>
</dbReference>
<dbReference type="NCBIfam" id="NF001220">
    <property type="entry name" value="PRK00194.1"/>
    <property type="match status" value="1"/>
</dbReference>
<dbReference type="PANTHER" id="PTHR34875">
    <property type="entry name" value="UPF0237 PROTEIN MJ1558"/>
    <property type="match status" value="1"/>
</dbReference>
<dbReference type="PANTHER" id="PTHR34875:SF6">
    <property type="entry name" value="UPF0237 PROTEIN MJ1558"/>
    <property type="match status" value="1"/>
</dbReference>
<dbReference type="Pfam" id="PF13740">
    <property type="entry name" value="ACT_6"/>
    <property type="match status" value="1"/>
</dbReference>
<dbReference type="SUPFAM" id="SSF55021">
    <property type="entry name" value="ACT-like"/>
    <property type="match status" value="1"/>
</dbReference>
<dbReference type="PROSITE" id="PS51671">
    <property type="entry name" value="ACT"/>
    <property type="match status" value="1"/>
</dbReference>
<evidence type="ECO:0000255" key="1">
    <source>
        <dbReference type="HAMAP-Rule" id="MF_01054"/>
    </source>
</evidence>
<proteinExistence type="inferred from homology"/>
<sequence>MKAIITVIGKDKVGIIAGVSSILAEMKINILDISQTIMQEYFTMIMLTDLSCSVVSFDKVKTELDEKGKKLGVSIKIQDEGIFNSMNRV</sequence>